<reference key="1">
    <citation type="journal article" date="2003" name="Proc. Natl. Acad. Sci. U.S.A.">
        <title>Complete genome sequence of the marine planctomycete Pirellula sp. strain 1.</title>
        <authorList>
            <person name="Gloeckner F.O."/>
            <person name="Kube M."/>
            <person name="Bauer M."/>
            <person name="Teeling H."/>
            <person name="Lombardot T."/>
            <person name="Ludwig W."/>
            <person name="Gade D."/>
            <person name="Beck A."/>
            <person name="Borzym K."/>
            <person name="Heitmann K."/>
            <person name="Rabus R."/>
            <person name="Schlesner H."/>
            <person name="Amann R."/>
            <person name="Reinhardt R."/>
        </authorList>
    </citation>
    <scope>NUCLEOTIDE SEQUENCE [LARGE SCALE GENOMIC DNA]</scope>
    <source>
        <strain>DSM 10527 / NCIMB 13988 / SH1</strain>
    </source>
</reference>
<protein>
    <recommendedName>
        <fullName evidence="1">Glutamate-1-semialdehyde 2,1-aminomutase</fullName>
        <shortName evidence="1">GSA</shortName>
        <ecNumber evidence="1">5.4.3.8</ecNumber>
    </recommendedName>
    <alternativeName>
        <fullName evidence="1">Glutamate-1-semialdehyde aminotransferase</fullName>
        <shortName evidence="1">GSA-AT</shortName>
    </alternativeName>
</protein>
<organism>
    <name type="scientific">Rhodopirellula baltica (strain DSM 10527 / NCIMB 13988 / SH1)</name>
    <dbReference type="NCBI Taxonomy" id="243090"/>
    <lineage>
        <taxon>Bacteria</taxon>
        <taxon>Pseudomonadati</taxon>
        <taxon>Planctomycetota</taxon>
        <taxon>Planctomycetia</taxon>
        <taxon>Pirellulales</taxon>
        <taxon>Pirellulaceae</taxon>
        <taxon>Rhodopirellula</taxon>
    </lineage>
</organism>
<dbReference type="EC" id="5.4.3.8" evidence="1"/>
<dbReference type="EMBL" id="BX294144">
    <property type="protein sequence ID" value="CAD75032.1"/>
    <property type="molecule type" value="Genomic_DNA"/>
</dbReference>
<dbReference type="RefSeq" id="NP_867486.1">
    <property type="nucleotide sequence ID" value="NC_005027.1"/>
</dbReference>
<dbReference type="RefSeq" id="WP_007331929.1">
    <property type="nucleotide sequence ID" value="NC_005027.1"/>
</dbReference>
<dbReference type="SMR" id="Q7UPM9"/>
<dbReference type="FunCoup" id="Q7UPM9">
    <property type="interactions" value="513"/>
</dbReference>
<dbReference type="STRING" id="243090.RB6831"/>
<dbReference type="EnsemblBacteria" id="CAD75032">
    <property type="protein sequence ID" value="CAD75032"/>
    <property type="gene ID" value="RB6831"/>
</dbReference>
<dbReference type="KEGG" id="rba:RB6831"/>
<dbReference type="PATRIC" id="fig|243090.15.peg.3315"/>
<dbReference type="eggNOG" id="COG0001">
    <property type="taxonomic scope" value="Bacteria"/>
</dbReference>
<dbReference type="HOGENOM" id="CLU_016922_1_5_0"/>
<dbReference type="InParanoid" id="Q7UPM9"/>
<dbReference type="OrthoDB" id="9816013at2"/>
<dbReference type="UniPathway" id="UPA00251">
    <property type="reaction ID" value="UER00317"/>
</dbReference>
<dbReference type="Proteomes" id="UP000001025">
    <property type="component" value="Chromosome"/>
</dbReference>
<dbReference type="GO" id="GO:0005737">
    <property type="term" value="C:cytoplasm"/>
    <property type="evidence" value="ECO:0007669"/>
    <property type="project" value="UniProtKB-SubCell"/>
</dbReference>
<dbReference type="GO" id="GO:0042286">
    <property type="term" value="F:glutamate-1-semialdehyde 2,1-aminomutase activity"/>
    <property type="evidence" value="ECO:0007669"/>
    <property type="project" value="UniProtKB-UniRule"/>
</dbReference>
<dbReference type="GO" id="GO:0030170">
    <property type="term" value="F:pyridoxal phosphate binding"/>
    <property type="evidence" value="ECO:0007669"/>
    <property type="project" value="InterPro"/>
</dbReference>
<dbReference type="GO" id="GO:0008483">
    <property type="term" value="F:transaminase activity"/>
    <property type="evidence" value="ECO:0007669"/>
    <property type="project" value="InterPro"/>
</dbReference>
<dbReference type="GO" id="GO:0006782">
    <property type="term" value="P:protoporphyrinogen IX biosynthetic process"/>
    <property type="evidence" value="ECO:0007669"/>
    <property type="project" value="UniProtKB-UniRule"/>
</dbReference>
<dbReference type="CDD" id="cd00610">
    <property type="entry name" value="OAT_like"/>
    <property type="match status" value="1"/>
</dbReference>
<dbReference type="FunFam" id="3.40.640.10:FF:000021">
    <property type="entry name" value="Glutamate-1-semialdehyde 2,1-aminomutase"/>
    <property type="match status" value="1"/>
</dbReference>
<dbReference type="Gene3D" id="3.90.1150.10">
    <property type="entry name" value="Aspartate Aminotransferase, domain 1"/>
    <property type="match status" value="1"/>
</dbReference>
<dbReference type="Gene3D" id="3.40.640.10">
    <property type="entry name" value="Type I PLP-dependent aspartate aminotransferase-like (Major domain)"/>
    <property type="match status" value="1"/>
</dbReference>
<dbReference type="HAMAP" id="MF_00375">
    <property type="entry name" value="HemL_aminotrans_3"/>
    <property type="match status" value="1"/>
</dbReference>
<dbReference type="InterPro" id="IPR004639">
    <property type="entry name" value="4pyrrol_synth_GluAld_NH2Trfase"/>
</dbReference>
<dbReference type="InterPro" id="IPR005814">
    <property type="entry name" value="Aminotrans_3"/>
</dbReference>
<dbReference type="InterPro" id="IPR049704">
    <property type="entry name" value="Aminotrans_3_PPA_site"/>
</dbReference>
<dbReference type="InterPro" id="IPR015424">
    <property type="entry name" value="PyrdxlP-dep_Trfase"/>
</dbReference>
<dbReference type="InterPro" id="IPR015421">
    <property type="entry name" value="PyrdxlP-dep_Trfase_major"/>
</dbReference>
<dbReference type="InterPro" id="IPR015422">
    <property type="entry name" value="PyrdxlP-dep_Trfase_small"/>
</dbReference>
<dbReference type="NCBIfam" id="TIGR00713">
    <property type="entry name" value="hemL"/>
    <property type="match status" value="1"/>
</dbReference>
<dbReference type="NCBIfam" id="NF000818">
    <property type="entry name" value="PRK00062.1"/>
    <property type="match status" value="1"/>
</dbReference>
<dbReference type="PANTHER" id="PTHR43713">
    <property type="entry name" value="GLUTAMATE-1-SEMIALDEHYDE 2,1-AMINOMUTASE"/>
    <property type="match status" value="1"/>
</dbReference>
<dbReference type="PANTHER" id="PTHR43713:SF3">
    <property type="entry name" value="GLUTAMATE-1-SEMIALDEHYDE 2,1-AMINOMUTASE 1, CHLOROPLASTIC-RELATED"/>
    <property type="match status" value="1"/>
</dbReference>
<dbReference type="Pfam" id="PF00202">
    <property type="entry name" value="Aminotran_3"/>
    <property type="match status" value="1"/>
</dbReference>
<dbReference type="SUPFAM" id="SSF53383">
    <property type="entry name" value="PLP-dependent transferases"/>
    <property type="match status" value="1"/>
</dbReference>
<dbReference type="PROSITE" id="PS00600">
    <property type="entry name" value="AA_TRANSFER_CLASS_3"/>
    <property type="match status" value="1"/>
</dbReference>
<proteinExistence type="inferred from homology"/>
<sequence>MNSPANSSAARPAAGPKSVAAFQRASALMPGGVNSPARAFGAVGGTPLFIERAEGPYLYDIDGNRYIDYIGSWGPMILGHAHPEVINAITQAAAKGTSYGAPTEAESRLAEQIIEAVPSIEKVRLVNSGTEATMSALRVARGATGRKKVIKFAGNYHGHVDSLLVAAGSAAATLGAPDSPGVTPGAAEDTLVLSYNDVSGLQNAFAQHGDDIAALILEPVVGNMGCVLPTMEFLNAARDLTTKHGSILIFDEVMTGFRVAYGGAQERFGVTPDMTTLGKIVGGGMPLGAYGGRADIMNQVLPAGKVFQAGTLSGNPVAVAAGSATLRLLKENPPYEQLERLADRLADGLDRAATSAGMAHTVAKAGAMLTLFFNPEPVDCWAVADRCDREAFGRYFWGLIDEGIYMPCSQFEALFFSQQHTEAMIDETIAAAEKVLKSL</sequence>
<feature type="chain" id="PRO_0000226305" description="Glutamate-1-semialdehyde 2,1-aminomutase">
    <location>
        <begin position="1"/>
        <end position="439"/>
    </location>
</feature>
<feature type="modified residue" description="N6-(pyridoxal phosphate)lysine" evidence="1">
    <location>
        <position position="279"/>
    </location>
</feature>
<gene>
    <name evidence="1" type="primary">hemL</name>
    <name type="ordered locus">RB6831</name>
</gene>
<evidence type="ECO:0000255" key="1">
    <source>
        <dbReference type="HAMAP-Rule" id="MF_00375"/>
    </source>
</evidence>
<keyword id="KW-0963">Cytoplasm</keyword>
<keyword id="KW-0413">Isomerase</keyword>
<keyword id="KW-0627">Porphyrin biosynthesis</keyword>
<keyword id="KW-0663">Pyridoxal phosphate</keyword>
<keyword id="KW-1185">Reference proteome</keyword>
<name>GSA_RHOBA</name>
<comment type="catalytic activity">
    <reaction evidence="1">
        <text>(S)-4-amino-5-oxopentanoate = 5-aminolevulinate</text>
        <dbReference type="Rhea" id="RHEA:14265"/>
        <dbReference type="ChEBI" id="CHEBI:57501"/>
        <dbReference type="ChEBI" id="CHEBI:356416"/>
        <dbReference type="EC" id="5.4.3.8"/>
    </reaction>
</comment>
<comment type="cofactor">
    <cofactor evidence="1">
        <name>pyridoxal 5'-phosphate</name>
        <dbReference type="ChEBI" id="CHEBI:597326"/>
    </cofactor>
</comment>
<comment type="pathway">
    <text evidence="1">Porphyrin-containing compound metabolism; protoporphyrin-IX biosynthesis; 5-aminolevulinate from L-glutamyl-tRNA(Glu): step 2/2.</text>
</comment>
<comment type="subunit">
    <text evidence="1">Homodimer.</text>
</comment>
<comment type="subcellular location">
    <subcellularLocation>
        <location evidence="1">Cytoplasm</location>
    </subcellularLocation>
</comment>
<comment type="similarity">
    <text evidence="1">Belongs to the class-III pyridoxal-phosphate-dependent aminotransferase family. HemL subfamily.</text>
</comment>
<accession>Q7UPM9</accession>